<evidence type="ECO:0000255" key="1">
    <source>
        <dbReference type="HAMAP-Rule" id="MF_00294"/>
    </source>
</evidence>
<feature type="chain" id="PRO_0000356737" description="Large ribosomal subunit protein bL33B">
    <location>
        <begin position="1"/>
        <end position="50"/>
    </location>
</feature>
<sequence length="50" mass="5658">MAQKKASLACVECGSRNYSIGVSSTPKPTRLEVNKFCKYCKTYTLHKETR</sequence>
<keyword id="KW-0687">Ribonucleoprotein</keyword>
<keyword id="KW-0689">Ribosomal protein</keyword>
<accession>A2RGQ2</accession>
<protein>
    <recommendedName>
        <fullName evidence="1">Large ribosomal subunit protein bL33B</fullName>
    </recommendedName>
    <alternativeName>
        <fullName evidence="1">50S ribosomal protein L33 2</fullName>
    </alternativeName>
</protein>
<name>RL332_STRPG</name>
<proteinExistence type="inferred from homology"/>
<comment type="similarity">
    <text evidence="1">Belongs to the bacterial ribosomal protein bL33 family.</text>
</comment>
<reference key="1">
    <citation type="journal article" date="2007" name="J. Bacteriol.">
        <title>Complete genome of acute rheumatic fever-associated serotype M5 Streptococcus pyogenes strain Manfredo.</title>
        <authorList>
            <person name="Holden M.T.G."/>
            <person name="Scott A."/>
            <person name="Cherevach I."/>
            <person name="Chillingworth T."/>
            <person name="Churcher C."/>
            <person name="Cronin A."/>
            <person name="Dowd L."/>
            <person name="Feltwell T."/>
            <person name="Hamlin N."/>
            <person name="Holroyd S."/>
            <person name="Jagels K."/>
            <person name="Moule S."/>
            <person name="Mungall K."/>
            <person name="Quail M.A."/>
            <person name="Price C."/>
            <person name="Rabbinowitsch E."/>
            <person name="Sharp S."/>
            <person name="Skelton J."/>
            <person name="Whitehead S."/>
            <person name="Barrell B.G."/>
            <person name="Kehoe M."/>
            <person name="Parkhill J."/>
        </authorList>
    </citation>
    <scope>NUCLEOTIDE SEQUENCE [LARGE SCALE GENOMIC DNA]</scope>
    <source>
        <strain>Manfredo</strain>
    </source>
</reference>
<dbReference type="EMBL" id="AM295007">
    <property type="protein sequence ID" value="CAM31034.1"/>
    <property type="molecule type" value="Genomic_DNA"/>
</dbReference>
<dbReference type="SMR" id="A2RGQ2"/>
<dbReference type="KEGG" id="spf:SpyM51714"/>
<dbReference type="HOGENOM" id="CLU_190949_0_1_9"/>
<dbReference type="GO" id="GO:0005737">
    <property type="term" value="C:cytoplasm"/>
    <property type="evidence" value="ECO:0007669"/>
    <property type="project" value="UniProtKB-ARBA"/>
</dbReference>
<dbReference type="GO" id="GO:1990904">
    <property type="term" value="C:ribonucleoprotein complex"/>
    <property type="evidence" value="ECO:0007669"/>
    <property type="project" value="UniProtKB-KW"/>
</dbReference>
<dbReference type="GO" id="GO:0005840">
    <property type="term" value="C:ribosome"/>
    <property type="evidence" value="ECO:0007669"/>
    <property type="project" value="UniProtKB-KW"/>
</dbReference>
<dbReference type="GO" id="GO:0003735">
    <property type="term" value="F:structural constituent of ribosome"/>
    <property type="evidence" value="ECO:0007669"/>
    <property type="project" value="InterPro"/>
</dbReference>
<dbReference type="GO" id="GO:0006412">
    <property type="term" value="P:translation"/>
    <property type="evidence" value="ECO:0007669"/>
    <property type="project" value="UniProtKB-UniRule"/>
</dbReference>
<dbReference type="Gene3D" id="2.20.28.120">
    <property type="entry name" value="Ribosomal protein L33"/>
    <property type="match status" value="1"/>
</dbReference>
<dbReference type="HAMAP" id="MF_00294">
    <property type="entry name" value="Ribosomal_bL33"/>
    <property type="match status" value="1"/>
</dbReference>
<dbReference type="InterPro" id="IPR001705">
    <property type="entry name" value="Ribosomal_bL33"/>
</dbReference>
<dbReference type="InterPro" id="IPR038584">
    <property type="entry name" value="Ribosomal_bL33_sf"/>
</dbReference>
<dbReference type="InterPro" id="IPR011332">
    <property type="entry name" value="Ribosomal_zn-bd"/>
</dbReference>
<dbReference type="NCBIfam" id="NF001764">
    <property type="entry name" value="PRK00504.1"/>
    <property type="match status" value="1"/>
</dbReference>
<dbReference type="NCBIfam" id="TIGR01023">
    <property type="entry name" value="rpmG_bact"/>
    <property type="match status" value="1"/>
</dbReference>
<dbReference type="Pfam" id="PF00471">
    <property type="entry name" value="Ribosomal_L33"/>
    <property type="match status" value="1"/>
</dbReference>
<dbReference type="SUPFAM" id="SSF57829">
    <property type="entry name" value="Zn-binding ribosomal proteins"/>
    <property type="match status" value="1"/>
</dbReference>
<organism>
    <name type="scientific">Streptococcus pyogenes serotype M5 (strain Manfredo)</name>
    <dbReference type="NCBI Taxonomy" id="160491"/>
    <lineage>
        <taxon>Bacteria</taxon>
        <taxon>Bacillati</taxon>
        <taxon>Bacillota</taxon>
        <taxon>Bacilli</taxon>
        <taxon>Lactobacillales</taxon>
        <taxon>Streptococcaceae</taxon>
        <taxon>Streptococcus</taxon>
    </lineage>
</organism>
<gene>
    <name evidence="1" type="primary">rpmG2</name>
    <name type="ordered locus">SpyM51714</name>
</gene>